<dbReference type="EC" id="2.5.1.19" evidence="1"/>
<dbReference type="EMBL" id="CP000020">
    <property type="protein sequence ID" value="AAW86256.1"/>
    <property type="molecule type" value="Genomic_DNA"/>
</dbReference>
<dbReference type="RefSeq" id="WP_011262299.1">
    <property type="nucleotide sequence ID" value="NC_006840.2"/>
</dbReference>
<dbReference type="RefSeq" id="YP_205144.1">
    <property type="nucleotide sequence ID" value="NC_006840.2"/>
</dbReference>
<dbReference type="SMR" id="Q5E3Z0"/>
<dbReference type="STRING" id="312309.VF_1761"/>
<dbReference type="EnsemblBacteria" id="AAW86256">
    <property type="protein sequence ID" value="AAW86256"/>
    <property type="gene ID" value="VF_1761"/>
</dbReference>
<dbReference type="GeneID" id="54164460"/>
<dbReference type="KEGG" id="vfi:VF_1761"/>
<dbReference type="PATRIC" id="fig|312309.11.peg.1787"/>
<dbReference type="eggNOG" id="COG0128">
    <property type="taxonomic scope" value="Bacteria"/>
</dbReference>
<dbReference type="HOGENOM" id="CLU_024321_0_0_6"/>
<dbReference type="OrthoDB" id="9809920at2"/>
<dbReference type="UniPathway" id="UPA00053">
    <property type="reaction ID" value="UER00089"/>
</dbReference>
<dbReference type="Proteomes" id="UP000000537">
    <property type="component" value="Chromosome I"/>
</dbReference>
<dbReference type="GO" id="GO:0005737">
    <property type="term" value="C:cytoplasm"/>
    <property type="evidence" value="ECO:0007669"/>
    <property type="project" value="UniProtKB-SubCell"/>
</dbReference>
<dbReference type="GO" id="GO:0003866">
    <property type="term" value="F:3-phosphoshikimate 1-carboxyvinyltransferase activity"/>
    <property type="evidence" value="ECO:0007669"/>
    <property type="project" value="UniProtKB-UniRule"/>
</dbReference>
<dbReference type="GO" id="GO:0008652">
    <property type="term" value="P:amino acid biosynthetic process"/>
    <property type="evidence" value="ECO:0007669"/>
    <property type="project" value="UniProtKB-KW"/>
</dbReference>
<dbReference type="GO" id="GO:0009073">
    <property type="term" value="P:aromatic amino acid family biosynthetic process"/>
    <property type="evidence" value="ECO:0007669"/>
    <property type="project" value="UniProtKB-KW"/>
</dbReference>
<dbReference type="GO" id="GO:0009423">
    <property type="term" value="P:chorismate biosynthetic process"/>
    <property type="evidence" value="ECO:0007669"/>
    <property type="project" value="UniProtKB-UniRule"/>
</dbReference>
<dbReference type="CDD" id="cd01556">
    <property type="entry name" value="EPSP_synthase"/>
    <property type="match status" value="1"/>
</dbReference>
<dbReference type="FunFam" id="3.65.10.10:FF:000003">
    <property type="entry name" value="3-phosphoshikimate 1-carboxyvinyltransferase"/>
    <property type="match status" value="1"/>
</dbReference>
<dbReference type="FunFam" id="3.65.10.10:FF:000004">
    <property type="entry name" value="3-phosphoshikimate 1-carboxyvinyltransferase"/>
    <property type="match status" value="1"/>
</dbReference>
<dbReference type="Gene3D" id="3.65.10.10">
    <property type="entry name" value="Enolpyruvate transferase domain"/>
    <property type="match status" value="2"/>
</dbReference>
<dbReference type="HAMAP" id="MF_00210">
    <property type="entry name" value="EPSP_synth"/>
    <property type="match status" value="1"/>
</dbReference>
<dbReference type="InterPro" id="IPR001986">
    <property type="entry name" value="Enolpyruvate_Tfrase_dom"/>
</dbReference>
<dbReference type="InterPro" id="IPR036968">
    <property type="entry name" value="Enolpyruvate_Tfrase_sf"/>
</dbReference>
<dbReference type="InterPro" id="IPR006264">
    <property type="entry name" value="EPSP_synthase"/>
</dbReference>
<dbReference type="InterPro" id="IPR023193">
    <property type="entry name" value="EPSP_synthase_CS"/>
</dbReference>
<dbReference type="InterPro" id="IPR013792">
    <property type="entry name" value="RNA3'P_cycl/enolpyr_Trfase_a/b"/>
</dbReference>
<dbReference type="NCBIfam" id="TIGR01356">
    <property type="entry name" value="aroA"/>
    <property type="match status" value="1"/>
</dbReference>
<dbReference type="PANTHER" id="PTHR21090">
    <property type="entry name" value="AROM/DEHYDROQUINATE SYNTHASE"/>
    <property type="match status" value="1"/>
</dbReference>
<dbReference type="PANTHER" id="PTHR21090:SF5">
    <property type="entry name" value="PENTAFUNCTIONAL AROM POLYPEPTIDE"/>
    <property type="match status" value="1"/>
</dbReference>
<dbReference type="Pfam" id="PF00275">
    <property type="entry name" value="EPSP_synthase"/>
    <property type="match status" value="1"/>
</dbReference>
<dbReference type="PIRSF" id="PIRSF000505">
    <property type="entry name" value="EPSPS"/>
    <property type="match status" value="1"/>
</dbReference>
<dbReference type="SUPFAM" id="SSF55205">
    <property type="entry name" value="EPT/RTPC-like"/>
    <property type="match status" value="1"/>
</dbReference>
<dbReference type="PROSITE" id="PS00104">
    <property type="entry name" value="EPSP_SYNTHASE_1"/>
    <property type="match status" value="1"/>
</dbReference>
<dbReference type="PROSITE" id="PS00885">
    <property type="entry name" value="EPSP_SYNTHASE_2"/>
    <property type="match status" value="1"/>
</dbReference>
<reference key="1">
    <citation type="journal article" date="2005" name="Proc. Natl. Acad. Sci. U.S.A.">
        <title>Complete genome sequence of Vibrio fischeri: a symbiotic bacterium with pathogenic congeners.</title>
        <authorList>
            <person name="Ruby E.G."/>
            <person name="Urbanowski M."/>
            <person name="Campbell J."/>
            <person name="Dunn A."/>
            <person name="Faini M."/>
            <person name="Gunsalus R."/>
            <person name="Lostroh P."/>
            <person name="Lupp C."/>
            <person name="McCann J."/>
            <person name="Millikan D."/>
            <person name="Schaefer A."/>
            <person name="Stabb E."/>
            <person name="Stevens A."/>
            <person name="Visick K."/>
            <person name="Whistler C."/>
            <person name="Greenberg E.P."/>
        </authorList>
    </citation>
    <scope>NUCLEOTIDE SEQUENCE [LARGE SCALE GENOMIC DNA]</scope>
    <source>
        <strain>ATCC 700601 / ES114</strain>
    </source>
</reference>
<feature type="chain" id="PRO_1000012505" description="3-phosphoshikimate 1-carboxyvinyltransferase">
    <location>
        <begin position="1"/>
        <end position="426"/>
    </location>
</feature>
<feature type="active site" description="Proton acceptor" evidence="1">
    <location>
        <position position="314"/>
    </location>
</feature>
<feature type="binding site" evidence="1">
    <location>
        <position position="22"/>
    </location>
    <ligand>
        <name>3-phosphoshikimate</name>
        <dbReference type="ChEBI" id="CHEBI:145989"/>
    </ligand>
</feature>
<feature type="binding site" evidence="1">
    <location>
        <position position="22"/>
    </location>
    <ligand>
        <name>phosphoenolpyruvate</name>
        <dbReference type="ChEBI" id="CHEBI:58702"/>
    </ligand>
</feature>
<feature type="binding site" evidence="1">
    <location>
        <position position="23"/>
    </location>
    <ligand>
        <name>3-phosphoshikimate</name>
        <dbReference type="ChEBI" id="CHEBI:145989"/>
    </ligand>
</feature>
<feature type="binding site" evidence="1">
    <location>
        <position position="27"/>
    </location>
    <ligand>
        <name>3-phosphoshikimate</name>
        <dbReference type="ChEBI" id="CHEBI:145989"/>
    </ligand>
</feature>
<feature type="binding site" evidence="1">
    <location>
        <position position="96"/>
    </location>
    <ligand>
        <name>phosphoenolpyruvate</name>
        <dbReference type="ChEBI" id="CHEBI:58702"/>
    </ligand>
</feature>
<feature type="binding site" evidence="1">
    <location>
        <position position="124"/>
    </location>
    <ligand>
        <name>phosphoenolpyruvate</name>
        <dbReference type="ChEBI" id="CHEBI:58702"/>
    </ligand>
</feature>
<feature type="binding site" evidence="1">
    <location>
        <position position="170"/>
    </location>
    <ligand>
        <name>3-phosphoshikimate</name>
        <dbReference type="ChEBI" id="CHEBI:145989"/>
    </ligand>
</feature>
<feature type="binding site" evidence="1">
    <location>
        <position position="171"/>
    </location>
    <ligand>
        <name>3-phosphoshikimate</name>
        <dbReference type="ChEBI" id="CHEBI:145989"/>
    </ligand>
</feature>
<feature type="binding site" evidence="1">
    <location>
        <position position="172"/>
    </location>
    <ligand>
        <name>3-phosphoshikimate</name>
        <dbReference type="ChEBI" id="CHEBI:145989"/>
    </ligand>
</feature>
<feature type="binding site" evidence="1">
    <location>
        <position position="172"/>
    </location>
    <ligand>
        <name>phosphoenolpyruvate</name>
        <dbReference type="ChEBI" id="CHEBI:58702"/>
    </ligand>
</feature>
<feature type="binding site" evidence="1">
    <location>
        <position position="198"/>
    </location>
    <ligand>
        <name>3-phosphoshikimate</name>
        <dbReference type="ChEBI" id="CHEBI:145989"/>
    </ligand>
</feature>
<feature type="binding site" evidence="1">
    <location>
        <position position="314"/>
    </location>
    <ligand>
        <name>3-phosphoshikimate</name>
        <dbReference type="ChEBI" id="CHEBI:145989"/>
    </ligand>
</feature>
<feature type="binding site" evidence="1">
    <location>
        <position position="337"/>
    </location>
    <ligand>
        <name>3-phosphoshikimate</name>
        <dbReference type="ChEBI" id="CHEBI:145989"/>
    </ligand>
</feature>
<feature type="binding site" evidence="1">
    <location>
        <position position="341"/>
    </location>
    <ligand>
        <name>3-phosphoshikimate</name>
        <dbReference type="ChEBI" id="CHEBI:145989"/>
    </ligand>
</feature>
<feature type="binding site" evidence="1">
    <location>
        <position position="345"/>
    </location>
    <ligand>
        <name>phosphoenolpyruvate</name>
        <dbReference type="ChEBI" id="CHEBI:58702"/>
    </ligand>
</feature>
<feature type="binding site" evidence="1">
    <location>
        <position position="387"/>
    </location>
    <ligand>
        <name>phosphoenolpyruvate</name>
        <dbReference type="ChEBI" id="CHEBI:58702"/>
    </ligand>
</feature>
<feature type="binding site" evidence="1">
    <location>
        <position position="412"/>
    </location>
    <ligand>
        <name>phosphoenolpyruvate</name>
        <dbReference type="ChEBI" id="CHEBI:58702"/>
    </ligand>
</feature>
<sequence length="426" mass="45643">MESLTLQPISKINGQINLPGSKSVSNRALLLAALASGTTKLTNLLDSDDIRHMLNALKALGVEYKLSANKTECEVTGLGRAFEPNEALELFLGNAGTAMRPLAAALCLGQGEFVLTGEPRMKERPIGHLVTALKAAGADVEYLENENYPPLKIKGTGLHGGTVEIDGSISSQFLTAFLMAAPLSTQETTIKIVGDLVSKPYIDITLDIMATFGVKIENQNYQTFVVPANQTYVAPGDFLVEGDASSASYFLAAAAIKGGEVKVTGIGKKSIQGDVQFADALAAMGTEIEWGDDYVIARKGELNAIDMDFNHIPDAAMTIATAALFAKGTTSIRNVYNWRVKETDRLAAMATELRKVGAVVEEGEDYITITPPASLQHASIDTYDDHRMAMCFSLVALSDTPVTINDPGCTSKTFPDYFDKLKELSC</sequence>
<accession>Q5E3Z0</accession>
<organism>
    <name type="scientific">Aliivibrio fischeri (strain ATCC 700601 / ES114)</name>
    <name type="common">Vibrio fischeri</name>
    <dbReference type="NCBI Taxonomy" id="312309"/>
    <lineage>
        <taxon>Bacteria</taxon>
        <taxon>Pseudomonadati</taxon>
        <taxon>Pseudomonadota</taxon>
        <taxon>Gammaproteobacteria</taxon>
        <taxon>Vibrionales</taxon>
        <taxon>Vibrionaceae</taxon>
        <taxon>Aliivibrio</taxon>
    </lineage>
</organism>
<comment type="function">
    <text evidence="1">Catalyzes the transfer of the enolpyruvyl moiety of phosphoenolpyruvate (PEP) to the 5-hydroxyl of shikimate-3-phosphate (S3P) to produce enolpyruvyl shikimate-3-phosphate and inorganic phosphate.</text>
</comment>
<comment type="catalytic activity">
    <reaction evidence="1">
        <text>3-phosphoshikimate + phosphoenolpyruvate = 5-O-(1-carboxyvinyl)-3-phosphoshikimate + phosphate</text>
        <dbReference type="Rhea" id="RHEA:21256"/>
        <dbReference type="ChEBI" id="CHEBI:43474"/>
        <dbReference type="ChEBI" id="CHEBI:57701"/>
        <dbReference type="ChEBI" id="CHEBI:58702"/>
        <dbReference type="ChEBI" id="CHEBI:145989"/>
        <dbReference type="EC" id="2.5.1.19"/>
    </reaction>
    <physiologicalReaction direction="left-to-right" evidence="1">
        <dbReference type="Rhea" id="RHEA:21257"/>
    </physiologicalReaction>
</comment>
<comment type="pathway">
    <text evidence="1">Metabolic intermediate biosynthesis; chorismate biosynthesis; chorismate from D-erythrose 4-phosphate and phosphoenolpyruvate: step 6/7.</text>
</comment>
<comment type="subunit">
    <text evidence="1">Monomer.</text>
</comment>
<comment type="subcellular location">
    <subcellularLocation>
        <location evidence="1">Cytoplasm</location>
    </subcellularLocation>
</comment>
<comment type="similarity">
    <text evidence="1">Belongs to the EPSP synthase family.</text>
</comment>
<gene>
    <name evidence="1" type="primary">aroA</name>
    <name type="ordered locus">VF_1761</name>
</gene>
<evidence type="ECO:0000255" key="1">
    <source>
        <dbReference type="HAMAP-Rule" id="MF_00210"/>
    </source>
</evidence>
<protein>
    <recommendedName>
        <fullName evidence="1">3-phosphoshikimate 1-carboxyvinyltransferase</fullName>
        <ecNumber evidence="1">2.5.1.19</ecNumber>
    </recommendedName>
    <alternativeName>
        <fullName evidence="1">5-enolpyruvylshikimate-3-phosphate synthase</fullName>
        <shortName evidence="1">EPSP synthase</shortName>
        <shortName evidence="1">EPSPS</shortName>
    </alternativeName>
</protein>
<name>AROA_ALIF1</name>
<keyword id="KW-0028">Amino-acid biosynthesis</keyword>
<keyword id="KW-0057">Aromatic amino acid biosynthesis</keyword>
<keyword id="KW-0963">Cytoplasm</keyword>
<keyword id="KW-1185">Reference proteome</keyword>
<keyword id="KW-0808">Transferase</keyword>
<proteinExistence type="inferred from homology"/>